<dbReference type="EMBL" id="CP000090">
    <property type="protein sequence ID" value="AAZ61226.1"/>
    <property type="molecule type" value="Genomic_DNA"/>
</dbReference>
<dbReference type="SMR" id="Q470F7"/>
<dbReference type="STRING" id="264198.Reut_A1861"/>
<dbReference type="KEGG" id="reu:Reut_A1861"/>
<dbReference type="eggNOG" id="COG0691">
    <property type="taxonomic scope" value="Bacteria"/>
</dbReference>
<dbReference type="HOGENOM" id="CLU_108953_3_0_4"/>
<dbReference type="OrthoDB" id="9805462at2"/>
<dbReference type="GO" id="GO:0005829">
    <property type="term" value="C:cytosol"/>
    <property type="evidence" value="ECO:0007669"/>
    <property type="project" value="TreeGrafter"/>
</dbReference>
<dbReference type="GO" id="GO:0003723">
    <property type="term" value="F:RNA binding"/>
    <property type="evidence" value="ECO:0007669"/>
    <property type="project" value="UniProtKB-UniRule"/>
</dbReference>
<dbReference type="GO" id="GO:0070929">
    <property type="term" value="P:trans-translation"/>
    <property type="evidence" value="ECO:0007669"/>
    <property type="project" value="UniProtKB-UniRule"/>
</dbReference>
<dbReference type="CDD" id="cd09294">
    <property type="entry name" value="SmpB"/>
    <property type="match status" value="1"/>
</dbReference>
<dbReference type="Gene3D" id="2.40.280.10">
    <property type="match status" value="1"/>
</dbReference>
<dbReference type="HAMAP" id="MF_00023">
    <property type="entry name" value="SmpB"/>
    <property type="match status" value="1"/>
</dbReference>
<dbReference type="InterPro" id="IPR023620">
    <property type="entry name" value="SmpB"/>
</dbReference>
<dbReference type="InterPro" id="IPR000037">
    <property type="entry name" value="SsrA-bd_prot"/>
</dbReference>
<dbReference type="InterPro" id="IPR020081">
    <property type="entry name" value="SsrA-bd_prot_CS"/>
</dbReference>
<dbReference type="NCBIfam" id="NF003843">
    <property type="entry name" value="PRK05422.1"/>
    <property type="match status" value="1"/>
</dbReference>
<dbReference type="NCBIfam" id="TIGR00086">
    <property type="entry name" value="smpB"/>
    <property type="match status" value="1"/>
</dbReference>
<dbReference type="PANTHER" id="PTHR30308:SF2">
    <property type="entry name" value="SSRA-BINDING PROTEIN"/>
    <property type="match status" value="1"/>
</dbReference>
<dbReference type="PANTHER" id="PTHR30308">
    <property type="entry name" value="TMRNA-BINDING COMPONENT OF TRANS-TRANSLATION TAGGING COMPLEX"/>
    <property type="match status" value="1"/>
</dbReference>
<dbReference type="Pfam" id="PF01668">
    <property type="entry name" value="SmpB"/>
    <property type="match status" value="1"/>
</dbReference>
<dbReference type="SUPFAM" id="SSF74982">
    <property type="entry name" value="Small protein B (SmpB)"/>
    <property type="match status" value="1"/>
</dbReference>
<dbReference type="PROSITE" id="PS01317">
    <property type="entry name" value="SSRP"/>
    <property type="match status" value="1"/>
</dbReference>
<proteinExistence type="inferred from homology"/>
<name>SSRP_CUPPJ</name>
<reference key="1">
    <citation type="journal article" date="2010" name="PLoS ONE">
        <title>The complete multipartite genome sequence of Cupriavidus necator JMP134, a versatile pollutant degrader.</title>
        <authorList>
            <person name="Lykidis A."/>
            <person name="Perez-Pantoja D."/>
            <person name="Ledger T."/>
            <person name="Mavromatis K."/>
            <person name="Anderson I.J."/>
            <person name="Ivanova N.N."/>
            <person name="Hooper S.D."/>
            <person name="Lapidus A."/>
            <person name="Lucas S."/>
            <person name="Gonzalez B."/>
            <person name="Kyrpides N.C."/>
        </authorList>
    </citation>
    <scope>NUCLEOTIDE SEQUENCE [LARGE SCALE GENOMIC DNA]</scope>
    <source>
        <strain>JMP134 / LMG 1197</strain>
    </source>
</reference>
<keyword id="KW-0963">Cytoplasm</keyword>
<keyword id="KW-0694">RNA-binding</keyword>
<evidence type="ECO:0000255" key="1">
    <source>
        <dbReference type="HAMAP-Rule" id="MF_00023"/>
    </source>
</evidence>
<evidence type="ECO:0000256" key="2">
    <source>
        <dbReference type="SAM" id="MobiDB-lite"/>
    </source>
</evidence>
<feature type="chain" id="PRO_1000002121" description="SsrA-binding protein">
    <location>
        <begin position="1"/>
        <end position="150"/>
    </location>
</feature>
<feature type="region of interest" description="Disordered" evidence="2">
    <location>
        <begin position="129"/>
        <end position="150"/>
    </location>
</feature>
<sequence length="150" mass="17273">MTIADNKKAFFDYFIEERFEAGIVLEGWEVKAIRAGRVQIKEGYVVVRDAEMFLIGAHISPLQSASTHVNPDPVRTRKLLLKADEIKKLIGKVEQRGYTLVPLNLHYTRGRVKCEIGLGKGKKLFDKRETEKQRDWQREKSRIMKGGSKE</sequence>
<protein>
    <recommendedName>
        <fullName evidence="1">SsrA-binding protein</fullName>
    </recommendedName>
    <alternativeName>
        <fullName evidence="1">Small protein B</fullName>
    </alternativeName>
</protein>
<gene>
    <name evidence="1" type="primary">smpB</name>
    <name type="ordered locus">Reut_A1861</name>
</gene>
<comment type="function">
    <text evidence="1">Required for rescue of stalled ribosomes mediated by trans-translation. Binds to transfer-messenger RNA (tmRNA), required for stable association of tmRNA with ribosomes. tmRNA and SmpB together mimic tRNA shape, replacing the anticodon stem-loop with SmpB. tmRNA is encoded by the ssrA gene; the 2 termini fold to resemble tRNA(Ala) and it encodes a 'tag peptide', a short internal open reading frame. During trans-translation Ala-aminoacylated tmRNA acts like a tRNA, entering the A-site of stalled ribosomes, displacing the stalled mRNA. The ribosome then switches to translate the ORF on the tmRNA; the nascent peptide is terminated with the 'tag peptide' encoded by the tmRNA and targeted for degradation. The ribosome is freed to recommence translation, which seems to be the essential function of trans-translation.</text>
</comment>
<comment type="subcellular location">
    <subcellularLocation>
        <location evidence="1">Cytoplasm</location>
    </subcellularLocation>
    <text evidence="1">The tmRNA-SmpB complex associates with stalled 70S ribosomes.</text>
</comment>
<comment type="similarity">
    <text evidence="1">Belongs to the SmpB family.</text>
</comment>
<organism>
    <name type="scientific">Cupriavidus pinatubonensis (strain JMP 134 / LMG 1197)</name>
    <name type="common">Cupriavidus necator (strain JMP 134)</name>
    <dbReference type="NCBI Taxonomy" id="264198"/>
    <lineage>
        <taxon>Bacteria</taxon>
        <taxon>Pseudomonadati</taxon>
        <taxon>Pseudomonadota</taxon>
        <taxon>Betaproteobacteria</taxon>
        <taxon>Burkholderiales</taxon>
        <taxon>Burkholderiaceae</taxon>
        <taxon>Cupriavidus</taxon>
    </lineage>
</organism>
<accession>Q470F7</accession>